<evidence type="ECO:0000255" key="1">
    <source>
        <dbReference type="HAMAP-Rule" id="MF_00068"/>
    </source>
</evidence>
<sequence length="302" mass="32610">MTNISLDKLVTESRNENTKNIDRVETLEMLKMINNEDKKVAEAVEKELIHIAKAVDKIGEAFLNGGRLIYVGAGTSGRLGVLDASECPPTYGVSYDLVRGIIAGGESAMFKAREGAEDSKKLCIKDLKNINFGKNDILAGIAASGRTPYVIGGLEYANGIGATTISVTCNPESEMSKIANISIAPVVGPEAITGSTRMKAGTAQKMVLNMLSTGAMVKTGKVYGNLMVDLKATNEKLVERAKRIVMQATGSKREQVEKILKETNFDVKLSIFMIESSLDKIKAKEILDKNKGYIVEAIKEIS</sequence>
<comment type="function">
    <text evidence="1">Specifically catalyzes the cleavage of the D-lactyl ether substituent of MurNAc 6-phosphate, producing GlcNAc 6-phosphate and D-lactate.</text>
</comment>
<comment type="catalytic activity">
    <reaction evidence="1">
        <text>N-acetyl-D-muramate 6-phosphate + H2O = N-acetyl-D-glucosamine 6-phosphate + (R)-lactate</text>
        <dbReference type="Rhea" id="RHEA:26410"/>
        <dbReference type="ChEBI" id="CHEBI:15377"/>
        <dbReference type="ChEBI" id="CHEBI:16004"/>
        <dbReference type="ChEBI" id="CHEBI:57513"/>
        <dbReference type="ChEBI" id="CHEBI:58722"/>
        <dbReference type="EC" id="4.2.1.126"/>
    </reaction>
</comment>
<comment type="pathway">
    <text evidence="1">Amino-sugar metabolism; N-acetylmuramate degradation.</text>
</comment>
<comment type="subunit">
    <text evidence="1">Homodimer.</text>
</comment>
<comment type="miscellaneous">
    <text evidence="1">A lyase-type mechanism (elimination/hydration) is suggested for the cleavage of the lactyl ether bond of MurNAc 6-phosphate, with the formation of an alpha,beta-unsaturated aldehyde intermediate with (E)-stereochemistry, followed by the syn addition of water to give product.</text>
</comment>
<comment type="similarity">
    <text evidence="1">Belongs to the GCKR-like family. MurNAc-6-P etherase subfamily.</text>
</comment>
<organism>
    <name type="scientific">Clostridium botulinum (strain Kyoto / Type A2)</name>
    <dbReference type="NCBI Taxonomy" id="536232"/>
    <lineage>
        <taxon>Bacteria</taxon>
        <taxon>Bacillati</taxon>
        <taxon>Bacillota</taxon>
        <taxon>Clostridia</taxon>
        <taxon>Eubacteriales</taxon>
        <taxon>Clostridiaceae</taxon>
        <taxon>Clostridium</taxon>
    </lineage>
</organism>
<feature type="chain" id="PRO_1000118009" description="N-acetylmuramic acid 6-phosphate etherase">
    <location>
        <begin position="1"/>
        <end position="302"/>
    </location>
</feature>
<feature type="domain" description="SIS" evidence="1">
    <location>
        <begin position="58"/>
        <end position="221"/>
    </location>
</feature>
<feature type="active site" description="Proton donor" evidence="1">
    <location>
        <position position="86"/>
    </location>
</feature>
<feature type="active site" evidence="1">
    <location>
        <position position="117"/>
    </location>
</feature>
<gene>
    <name evidence="1" type="primary">murQ</name>
    <name type="ordered locus">CLM_1520</name>
</gene>
<proteinExistence type="inferred from homology"/>
<reference key="1">
    <citation type="submission" date="2008-10" db="EMBL/GenBank/DDBJ databases">
        <title>Genome sequence of Clostridium botulinum A2 Kyoto.</title>
        <authorList>
            <person name="Shrivastava S."/>
            <person name="Brinkac L.M."/>
            <person name="Brown J.L."/>
            <person name="Bruce D."/>
            <person name="Detter C.C."/>
            <person name="Johnson E.A."/>
            <person name="Munk C.A."/>
            <person name="Smith L.A."/>
            <person name="Smith T.J."/>
            <person name="Sutton G."/>
            <person name="Brettin T.S."/>
        </authorList>
    </citation>
    <scope>NUCLEOTIDE SEQUENCE [LARGE SCALE GENOMIC DNA]</scope>
    <source>
        <strain>Kyoto / Type A2</strain>
    </source>
</reference>
<dbReference type="EC" id="4.2.1.126" evidence="1"/>
<dbReference type="EMBL" id="CP001581">
    <property type="protein sequence ID" value="ACO87176.1"/>
    <property type="molecule type" value="Genomic_DNA"/>
</dbReference>
<dbReference type="RefSeq" id="WP_011948949.1">
    <property type="nucleotide sequence ID" value="NC_012563.1"/>
</dbReference>
<dbReference type="SMR" id="C1FLJ7"/>
<dbReference type="GeneID" id="5185598"/>
<dbReference type="KEGG" id="cby:CLM_1520"/>
<dbReference type="eggNOG" id="COG2103">
    <property type="taxonomic scope" value="Bacteria"/>
</dbReference>
<dbReference type="HOGENOM" id="CLU_049049_1_1_9"/>
<dbReference type="UniPathway" id="UPA00342"/>
<dbReference type="Proteomes" id="UP000001374">
    <property type="component" value="Chromosome"/>
</dbReference>
<dbReference type="GO" id="GO:0097367">
    <property type="term" value="F:carbohydrate derivative binding"/>
    <property type="evidence" value="ECO:0007669"/>
    <property type="project" value="InterPro"/>
</dbReference>
<dbReference type="GO" id="GO:0016835">
    <property type="term" value="F:carbon-oxygen lyase activity"/>
    <property type="evidence" value="ECO:0007669"/>
    <property type="project" value="UniProtKB-UniRule"/>
</dbReference>
<dbReference type="GO" id="GO:0016803">
    <property type="term" value="F:ether hydrolase activity"/>
    <property type="evidence" value="ECO:0007669"/>
    <property type="project" value="TreeGrafter"/>
</dbReference>
<dbReference type="GO" id="GO:0046348">
    <property type="term" value="P:amino sugar catabolic process"/>
    <property type="evidence" value="ECO:0007669"/>
    <property type="project" value="InterPro"/>
</dbReference>
<dbReference type="GO" id="GO:0097173">
    <property type="term" value="P:N-acetylmuramic acid catabolic process"/>
    <property type="evidence" value="ECO:0007669"/>
    <property type="project" value="UniProtKB-UniPathway"/>
</dbReference>
<dbReference type="GO" id="GO:0009254">
    <property type="term" value="P:peptidoglycan turnover"/>
    <property type="evidence" value="ECO:0007669"/>
    <property type="project" value="TreeGrafter"/>
</dbReference>
<dbReference type="CDD" id="cd05007">
    <property type="entry name" value="SIS_Etherase"/>
    <property type="match status" value="1"/>
</dbReference>
<dbReference type="FunFam" id="1.10.8.1080:FF:000001">
    <property type="entry name" value="N-acetylmuramic acid 6-phosphate etherase"/>
    <property type="match status" value="1"/>
</dbReference>
<dbReference type="FunFam" id="3.40.50.10490:FF:000014">
    <property type="entry name" value="N-acetylmuramic acid 6-phosphate etherase"/>
    <property type="match status" value="1"/>
</dbReference>
<dbReference type="Gene3D" id="1.10.8.1080">
    <property type="match status" value="1"/>
</dbReference>
<dbReference type="Gene3D" id="3.40.50.10490">
    <property type="entry name" value="Glucose-6-phosphate isomerase like protein, domain 1"/>
    <property type="match status" value="1"/>
</dbReference>
<dbReference type="HAMAP" id="MF_00068">
    <property type="entry name" value="MurQ"/>
    <property type="match status" value="1"/>
</dbReference>
<dbReference type="InterPro" id="IPR005488">
    <property type="entry name" value="Etherase_MurQ"/>
</dbReference>
<dbReference type="InterPro" id="IPR005486">
    <property type="entry name" value="Glucokinase_regulatory_CS"/>
</dbReference>
<dbReference type="InterPro" id="IPR040190">
    <property type="entry name" value="MURQ/GCKR"/>
</dbReference>
<dbReference type="InterPro" id="IPR001347">
    <property type="entry name" value="SIS_dom"/>
</dbReference>
<dbReference type="InterPro" id="IPR046348">
    <property type="entry name" value="SIS_dom_sf"/>
</dbReference>
<dbReference type="NCBIfam" id="TIGR00274">
    <property type="entry name" value="N-acetylmuramic acid 6-phosphate etherase"/>
    <property type="match status" value="1"/>
</dbReference>
<dbReference type="NCBIfam" id="NF003915">
    <property type="entry name" value="PRK05441.1"/>
    <property type="match status" value="1"/>
</dbReference>
<dbReference type="NCBIfam" id="NF009222">
    <property type="entry name" value="PRK12570.1"/>
    <property type="match status" value="1"/>
</dbReference>
<dbReference type="PANTHER" id="PTHR10088">
    <property type="entry name" value="GLUCOKINASE REGULATORY PROTEIN"/>
    <property type="match status" value="1"/>
</dbReference>
<dbReference type="PANTHER" id="PTHR10088:SF4">
    <property type="entry name" value="GLUCOKINASE REGULATORY PROTEIN"/>
    <property type="match status" value="1"/>
</dbReference>
<dbReference type="Pfam" id="PF22645">
    <property type="entry name" value="GKRP_SIS_N"/>
    <property type="match status" value="1"/>
</dbReference>
<dbReference type="SUPFAM" id="SSF53697">
    <property type="entry name" value="SIS domain"/>
    <property type="match status" value="1"/>
</dbReference>
<dbReference type="PROSITE" id="PS01272">
    <property type="entry name" value="GCKR"/>
    <property type="match status" value="1"/>
</dbReference>
<dbReference type="PROSITE" id="PS51464">
    <property type="entry name" value="SIS"/>
    <property type="match status" value="1"/>
</dbReference>
<keyword id="KW-0119">Carbohydrate metabolism</keyword>
<keyword id="KW-0456">Lyase</keyword>
<accession>C1FLJ7</accession>
<name>MURQ_CLOBJ</name>
<protein>
    <recommendedName>
        <fullName evidence="1">N-acetylmuramic acid 6-phosphate etherase</fullName>
        <shortName evidence="1">MurNAc-6-P etherase</shortName>
        <ecNumber evidence="1">4.2.1.126</ecNumber>
    </recommendedName>
    <alternativeName>
        <fullName evidence="1">N-acetylmuramic acid 6-phosphate hydrolase</fullName>
    </alternativeName>
    <alternativeName>
        <fullName evidence="1">N-acetylmuramic acid 6-phosphate lyase</fullName>
    </alternativeName>
</protein>